<proteinExistence type="evidence at protein level"/>
<accession>P83517</accession>
<comment type="function">
    <text evidence="3">Binds water, Ca(2+), Na(+), K(+), fatty acids, hormones, bilirubin and drugs. Its main function is the regulation of the colloidal osmotic pressure of blood.</text>
</comment>
<comment type="subcellular location">
    <subcellularLocation>
        <location evidence="3">Secreted</location>
    </subcellularLocation>
</comment>
<comment type="tissue specificity">
    <text evidence="3">Plasma.</text>
</comment>
<comment type="similarity">
    <text evidence="2 3">Belongs to the ALB/AFP/VDB family.</text>
</comment>
<organism evidence="3">
    <name type="scientific">Neoceratodus forsteri</name>
    <name type="common">Australian lungfish</name>
    <name type="synonym">Ceratodus forsteri</name>
    <dbReference type="NCBI Taxonomy" id="7892"/>
    <lineage>
        <taxon>Eukaryota</taxon>
        <taxon>Metazoa</taxon>
        <taxon>Chordata</taxon>
        <taxon>Craniata</taxon>
        <taxon>Vertebrata</taxon>
        <taxon>Euteleostomi</taxon>
        <taxon>Dipnomorpha</taxon>
        <taxon>Ceratodontiformes</taxon>
        <taxon>Ceratodontoidei</taxon>
        <taxon>Ceratodontidae</taxon>
        <taxon>Neoceratodus</taxon>
    </lineage>
</organism>
<evidence type="ECO:0000250" key="1">
    <source>
        <dbReference type="UniProtKB" id="P02770"/>
    </source>
</evidence>
<evidence type="ECO:0000255" key="2">
    <source>
        <dbReference type="PROSITE-ProRule" id="PRU00769"/>
    </source>
</evidence>
<evidence type="ECO:0000305" key="3"/>
<reference key="1">
    <citation type="journal article" date="2003" name="Appl. Bioinformatics">
        <title>Using serum albumin to infer vertebrate phylogenies.</title>
        <authorList>
            <person name="Metcalf V."/>
            <person name="Brennan S."/>
            <person name="George P."/>
        </authorList>
    </citation>
    <scope>PROTEIN SEQUENCE</scope>
    <source>
        <tissue>Plasma</tissue>
    </source>
</reference>
<keyword id="KW-0186">Copper</keyword>
<keyword id="KW-0903">Direct protein sequencing</keyword>
<keyword id="KW-0446">Lipid-binding</keyword>
<keyword id="KW-0479">Metal-binding</keyword>
<keyword id="KW-0677">Repeat</keyword>
<keyword id="KW-0964">Secreted</keyword>
<sequence length="101" mass="11413">DAEHKSNICKHFQVVGEEKFKNIILVTQDGHGPFIQVSKEEQCKHYAENRVPYMGNFIYTAAKRHPDLPATEVLIYAFXYESGAVLVSYPEMVGCCPPDVL</sequence>
<name>ALBU_NEOFS</name>
<feature type="chain" id="PRO_0000135616" description="Albumin">
    <location>
        <begin position="1"/>
        <end position="101" status="greater than"/>
    </location>
</feature>
<feature type="domain" description="Albumin 1" evidence="2 3">
    <location>
        <begin position="1"/>
        <end position="80" status="greater than"/>
    </location>
</feature>
<feature type="domain" description="Albumin 2" evidence="2 3">
    <location>
        <begin position="81" status="less than"/>
        <end position="101" status="greater than"/>
    </location>
</feature>
<feature type="binding site" evidence="1">
    <location>
        <position position="4"/>
    </location>
    <ligand>
        <name>Cu cation</name>
        <dbReference type="ChEBI" id="CHEBI:23378"/>
    </ligand>
</feature>
<feature type="non-consecutive residues" evidence="3">
    <location>
        <begin position="28"/>
        <end position="29"/>
    </location>
</feature>
<feature type="non-consecutive residues" evidence="3">
    <location>
        <begin position="80"/>
        <end position="81"/>
    </location>
</feature>
<feature type="non-terminal residue" evidence="3">
    <location>
        <position position="101"/>
    </location>
</feature>
<dbReference type="GO" id="GO:0005615">
    <property type="term" value="C:extracellular space"/>
    <property type="evidence" value="ECO:0007669"/>
    <property type="project" value="InterPro"/>
</dbReference>
<dbReference type="GO" id="GO:0008289">
    <property type="term" value="F:lipid binding"/>
    <property type="evidence" value="ECO:0007669"/>
    <property type="project" value="UniProtKB-KW"/>
</dbReference>
<dbReference type="GO" id="GO:0046872">
    <property type="term" value="F:metal ion binding"/>
    <property type="evidence" value="ECO:0007669"/>
    <property type="project" value="UniProtKB-KW"/>
</dbReference>
<dbReference type="Gene3D" id="1.10.246.10">
    <property type="match status" value="1"/>
</dbReference>
<dbReference type="InterPro" id="IPR020858">
    <property type="entry name" value="Serum_albumin-like"/>
</dbReference>
<dbReference type="SUPFAM" id="SSF48552">
    <property type="entry name" value="Serum albumin-like"/>
    <property type="match status" value="1"/>
</dbReference>
<protein>
    <recommendedName>
        <fullName>Albumin</fullName>
    </recommendedName>
</protein>
<gene>
    <name type="primary">alb</name>
</gene>